<accession>Q27888</accession>
<proteinExistence type="evidence at transcript level"/>
<feature type="chain" id="PRO_0000168493" description="L-lactate dehydrogenase">
    <location>
        <begin position="1"/>
        <end position="333"/>
    </location>
</feature>
<feature type="active site" description="Proton acceptor" evidence="1">
    <location>
        <position position="193"/>
    </location>
</feature>
<feature type="binding site" evidence="1">
    <location>
        <begin position="29"/>
        <end position="57"/>
    </location>
    <ligand>
        <name>NAD(+)</name>
        <dbReference type="ChEBI" id="CHEBI:57540"/>
    </ligand>
</feature>
<feature type="binding site" evidence="1">
    <location>
        <position position="99"/>
    </location>
    <ligand>
        <name>NAD(+)</name>
        <dbReference type="ChEBI" id="CHEBI:57540"/>
    </ligand>
</feature>
<feature type="binding site" evidence="1">
    <location>
        <position position="106"/>
    </location>
    <ligand>
        <name>substrate</name>
    </ligand>
</feature>
<feature type="binding site" evidence="1">
    <location>
        <position position="138"/>
    </location>
    <ligand>
        <name>NAD(+)</name>
        <dbReference type="ChEBI" id="CHEBI:57540"/>
    </ligand>
</feature>
<feature type="binding site" evidence="1">
    <location>
        <position position="138"/>
    </location>
    <ligand>
        <name>substrate</name>
    </ligand>
</feature>
<feature type="binding site" evidence="1">
    <location>
        <position position="169"/>
    </location>
    <ligand>
        <name>substrate</name>
    </ligand>
</feature>
<feature type="binding site" evidence="1">
    <location>
        <position position="249"/>
    </location>
    <ligand>
        <name>substrate</name>
    </ligand>
</feature>
<reference key="1">
    <citation type="journal article" date="1994" name="Biochem. Biophys. Res. Commun.">
        <title>The nucleotide and deduced amino-acid sequences of a cDNA encoding lactate dehydrogenase from Caenorhabditis elegans: the evolutionary relationships of lactate dehydrogenases from mammals, birds, amphibian, fish, nematode, plants, bacteria, mycoplasma, and plasmodium.</title>
        <authorList>
            <person name="Tsoi S.C.-M."/>
            <person name="Li S.S.-L."/>
        </authorList>
    </citation>
    <scope>NUCLEOTIDE SEQUENCE [MRNA]</scope>
</reference>
<reference key="2">
    <citation type="journal article" date="1995" name="Biochem. Mol. Biol. Int.">
        <title>The lactate dehydrogenase gene from nematode Caenorhabditis elegans contains only two of six introns conserved in the protein-encoding sequence of LDH genes from bird and mammals.</title>
        <authorList>
            <person name="Mannen H."/>
            <person name="Li S.S.-L."/>
        </authorList>
    </citation>
    <scope>NUCLEOTIDE SEQUENCE [GENOMIC DNA]</scope>
</reference>
<reference key="3">
    <citation type="journal article" date="1998" name="Science">
        <title>Genome sequence of the nematode C. elegans: a platform for investigating biology.</title>
        <authorList>
            <consortium name="The C. elegans sequencing consortium"/>
        </authorList>
    </citation>
    <scope>NUCLEOTIDE SEQUENCE [LARGE SCALE GENOMIC DNA]</scope>
    <source>
        <strain>Bristol N2</strain>
    </source>
</reference>
<keyword id="KW-0963">Cytoplasm</keyword>
<keyword id="KW-0520">NAD</keyword>
<keyword id="KW-0560">Oxidoreductase</keyword>
<keyword id="KW-1185">Reference proteome</keyword>
<dbReference type="EC" id="1.1.1.27"/>
<dbReference type="EMBL" id="U15420">
    <property type="protein sequence ID" value="AAA67063.1"/>
    <property type="molecule type" value="mRNA"/>
</dbReference>
<dbReference type="EMBL" id="L43563">
    <property type="protein sequence ID" value="AAC41613.1"/>
    <property type="molecule type" value="Genomic_DNA"/>
</dbReference>
<dbReference type="EMBL" id="Z49127">
    <property type="protein sequence ID" value="CAA88944.1"/>
    <property type="molecule type" value="Genomic_DNA"/>
</dbReference>
<dbReference type="PIR" id="JC2432">
    <property type="entry name" value="JC2432"/>
</dbReference>
<dbReference type="RefSeq" id="NP_496503.1">
    <property type="nucleotide sequence ID" value="NM_064102.6"/>
</dbReference>
<dbReference type="SMR" id="Q27888"/>
<dbReference type="BioGRID" id="40103">
    <property type="interactions" value="33"/>
</dbReference>
<dbReference type="FunCoup" id="Q27888">
    <property type="interactions" value="301"/>
</dbReference>
<dbReference type="IntAct" id="Q27888">
    <property type="interactions" value="1"/>
</dbReference>
<dbReference type="STRING" id="6239.F13D12.2b.1"/>
<dbReference type="PaxDb" id="6239-F13D12.2"/>
<dbReference type="PeptideAtlas" id="Q27888"/>
<dbReference type="EnsemblMetazoa" id="F13D12.2a.1">
    <property type="protein sequence ID" value="F13D12.2a.1"/>
    <property type="gene ID" value="WBGene00002262"/>
</dbReference>
<dbReference type="GeneID" id="174798"/>
<dbReference type="KEGG" id="cel:CELE_F13D12.2"/>
<dbReference type="UCSC" id="F13D12.2">
    <property type="organism name" value="c. elegans"/>
</dbReference>
<dbReference type="AGR" id="WB:WBGene00002262"/>
<dbReference type="CTD" id="174798"/>
<dbReference type="WormBase" id="F13D12.2a">
    <property type="protein sequence ID" value="CE02181"/>
    <property type="gene ID" value="WBGene00002262"/>
    <property type="gene designation" value="ldh-1"/>
</dbReference>
<dbReference type="eggNOG" id="KOG1495">
    <property type="taxonomic scope" value="Eukaryota"/>
</dbReference>
<dbReference type="GeneTree" id="ENSGT00940000164122"/>
<dbReference type="HOGENOM" id="CLU_045401_0_2_1"/>
<dbReference type="InParanoid" id="Q27888"/>
<dbReference type="OMA" id="THLDSMR"/>
<dbReference type="OrthoDB" id="5405561at2759"/>
<dbReference type="PhylomeDB" id="Q27888"/>
<dbReference type="Reactome" id="R-CEL-70268">
    <property type="pathway name" value="Pyruvate metabolism"/>
</dbReference>
<dbReference type="UniPathway" id="UPA00554">
    <property type="reaction ID" value="UER00611"/>
</dbReference>
<dbReference type="PRO" id="PR:Q27888"/>
<dbReference type="Proteomes" id="UP000001940">
    <property type="component" value="Chromosome II"/>
</dbReference>
<dbReference type="Bgee" id="WBGene00002262">
    <property type="expression patterns" value="Expressed in pharyngeal muscle cell (C elegans) and 4 other cell types or tissues"/>
</dbReference>
<dbReference type="ExpressionAtlas" id="Q27888">
    <property type="expression patterns" value="baseline and differential"/>
</dbReference>
<dbReference type="GO" id="GO:0005739">
    <property type="term" value="C:mitochondrion"/>
    <property type="evidence" value="ECO:0000318"/>
    <property type="project" value="GO_Central"/>
</dbReference>
<dbReference type="GO" id="GO:0004459">
    <property type="term" value="F:L-lactate dehydrogenase activity"/>
    <property type="evidence" value="ECO:0000314"/>
    <property type="project" value="WormBase"/>
</dbReference>
<dbReference type="GO" id="GO:0006089">
    <property type="term" value="P:lactate metabolic process"/>
    <property type="evidence" value="ECO:0000318"/>
    <property type="project" value="GO_Central"/>
</dbReference>
<dbReference type="GO" id="GO:0006090">
    <property type="term" value="P:pyruvate metabolic process"/>
    <property type="evidence" value="ECO:0000318"/>
    <property type="project" value="GO_Central"/>
</dbReference>
<dbReference type="CDD" id="cd05293">
    <property type="entry name" value="LDH_1"/>
    <property type="match status" value="1"/>
</dbReference>
<dbReference type="FunFam" id="3.40.50.720:FF:000018">
    <property type="entry name" value="Malate dehydrogenase"/>
    <property type="match status" value="1"/>
</dbReference>
<dbReference type="Gene3D" id="3.90.110.10">
    <property type="entry name" value="Lactate dehydrogenase/glycoside hydrolase, family 4, C-terminal"/>
    <property type="match status" value="1"/>
</dbReference>
<dbReference type="Gene3D" id="3.40.50.720">
    <property type="entry name" value="NAD(P)-binding Rossmann-like Domain"/>
    <property type="match status" value="1"/>
</dbReference>
<dbReference type="HAMAP" id="MF_00488">
    <property type="entry name" value="Lactate_dehydrog"/>
    <property type="match status" value="1"/>
</dbReference>
<dbReference type="InterPro" id="IPR001557">
    <property type="entry name" value="L-lactate/malate_DH"/>
</dbReference>
<dbReference type="InterPro" id="IPR011304">
    <property type="entry name" value="L-lactate_DH"/>
</dbReference>
<dbReference type="InterPro" id="IPR018177">
    <property type="entry name" value="L-lactate_DH_AS"/>
</dbReference>
<dbReference type="InterPro" id="IPR022383">
    <property type="entry name" value="Lactate/malate_DH_C"/>
</dbReference>
<dbReference type="InterPro" id="IPR001236">
    <property type="entry name" value="Lactate/malate_DH_N"/>
</dbReference>
<dbReference type="InterPro" id="IPR015955">
    <property type="entry name" value="Lactate_DH/Glyco_Ohase_4_C"/>
</dbReference>
<dbReference type="InterPro" id="IPR036291">
    <property type="entry name" value="NAD(P)-bd_dom_sf"/>
</dbReference>
<dbReference type="NCBIfam" id="TIGR01771">
    <property type="entry name" value="L-LDH-NAD"/>
    <property type="match status" value="1"/>
</dbReference>
<dbReference type="NCBIfam" id="NF000824">
    <property type="entry name" value="PRK00066.1"/>
    <property type="match status" value="1"/>
</dbReference>
<dbReference type="PANTHER" id="PTHR43128">
    <property type="entry name" value="L-2-HYDROXYCARBOXYLATE DEHYDROGENASE (NAD(P)(+))"/>
    <property type="match status" value="1"/>
</dbReference>
<dbReference type="PANTHER" id="PTHR43128:SF16">
    <property type="entry name" value="L-LACTATE DEHYDROGENASE"/>
    <property type="match status" value="1"/>
</dbReference>
<dbReference type="Pfam" id="PF02866">
    <property type="entry name" value="Ldh_1_C"/>
    <property type="match status" value="1"/>
</dbReference>
<dbReference type="Pfam" id="PF00056">
    <property type="entry name" value="Ldh_1_N"/>
    <property type="match status" value="1"/>
</dbReference>
<dbReference type="PIRSF" id="PIRSF000102">
    <property type="entry name" value="Lac_mal_DH"/>
    <property type="match status" value="1"/>
</dbReference>
<dbReference type="PRINTS" id="PR00086">
    <property type="entry name" value="LLDHDRGNASE"/>
</dbReference>
<dbReference type="SUPFAM" id="SSF56327">
    <property type="entry name" value="LDH C-terminal domain-like"/>
    <property type="match status" value="1"/>
</dbReference>
<dbReference type="SUPFAM" id="SSF51735">
    <property type="entry name" value="NAD(P)-binding Rossmann-fold domains"/>
    <property type="match status" value="1"/>
</dbReference>
<dbReference type="PROSITE" id="PS00064">
    <property type="entry name" value="L_LDH"/>
    <property type="match status" value="1"/>
</dbReference>
<evidence type="ECO:0000250" key="1"/>
<evidence type="ECO:0000305" key="2"/>
<sequence length="333" mass="36065">MASTIKEVFAEIAAPVENSHGKVTVVGVGQVGMACAYSILQQNLANELCLVDVVADKLKGEMMDLQHGLAFTRHCTVKADTDYSITAGSKLCVVTAGARQREGETRLSLVQRNVEIFKGIIPQLVKYSPDTCILVVSNPVDVLTYVTWKLSGLPRERVFGSGTNLDSARFRFLLSEKLNIAPSSCHGWIIGEHGDSSVAVWSGVNVAGVTLHEIKPDIGEKTDNEHWEAEIHKKVVDSAYEIIKLKGYTSWAIGLSVAKIAQGIFSNSRNVFALSTNVKGFHGINDDVYLSLPVVLGSAGLTHVVKQQLTEAEVQKLHNSAKALLEVQNGIVM</sequence>
<name>LDH_CAEEL</name>
<protein>
    <recommendedName>
        <fullName>L-lactate dehydrogenase</fullName>
        <shortName>LDH</shortName>
        <ecNumber>1.1.1.27</ecNumber>
    </recommendedName>
</protein>
<comment type="catalytic activity">
    <reaction>
        <text>(S)-lactate + NAD(+) = pyruvate + NADH + H(+)</text>
        <dbReference type="Rhea" id="RHEA:23444"/>
        <dbReference type="ChEBI" id="CHEBI:15361"/>
        <dbReference type="ChEBI" id="CHEBI:15378"/>
        <dbReference type="ChEBI" id="CHEBI:16651"/>
        <dbReference type="ChEBI" id="CHEBI:57540"/>
        <dbReference type="ChEBI" id="CHEBI:57945"/>
        <dbReference type="EC" id="1.1.1.27"/>
    </reaction>
</comment>
<comment type="pathway">
    <text>Fermentation; pyruvate fermentation to lactate; (S)-lactate from pyruvate: step 1/1.</text>
</comment>
<comment type="subunit">
    <text evidence="1">Homotetramer.</text>
</comment>
<comment type="subcellular location">
    <subcellularLocation>
        <location evidence="1">Cytoplasm</location>
    </subcellularLocation>
</comment>
<comment type="similarity">
    <text evidence="2">Belongs to the LDH/MDH superfamily. LDH family.</text>
</comment>
<gene>
    <name type="primary">ldh-1</name>
    <name type="ORF">F13D12.2</name>
</gene>
<organism>
    <name type="scientific">Caenorhabditis elegans</name>
    <dbReference type="NCBI Taxonomy" id="6239"/>
    <lineage>
        <taxon>Eukaryota</taxon>
        <taxon>Metazoa</taxon>
        <taxon>Ecdysozoa</taxon>
        <taxon>Nematoda</taxon>
        <taxon>Chromadorea</taxon>
        <taxon>Rhabditida</taxon>
        <taxon>Rhabditina</taxon>
        <taxon>Rhabditomorpha</taxon>
        <taxon>Rhabditoidea</taxon>
        <taxon>Rhabditidae</taxon>
        <taxon>Peloderinae</taxon>
        <taxon>Caenorhabditis</taxon>
    </lineage>
</organism>